<evidence type="ECO:0000255" key="1">
    <source>
        <dbReference type="HAMAP-Rule" id="MF_01395"/>
    </source>
</evidence>
<evidence type="ECO:0000255" key="2">
    <source>
        <dbReference type="PROSITE-ProRule" id="PRU01136"/>
    </source>
</evidence>
<evidence type="ECO:0000256" key="3">
    <source>
        <dbReference type="SAM" id="MobiDB-lite"/>
    </source>
</evidence>
<protein>
    <recommendedName>
        <fullName evidence="1">Acetyl-coenzyme A carboxylase carboxyl transferase subunit beta</fullName>
        <shortName evidence="1">ACCase subunit beta</shortName>
        <shortName evidence="1">Acetyl-CoA carboxylase carboxyltransferase subunit beta</shortName>
        <ecNumber evidence="1">2.1.3.15</ecNumber>
    </recommendedName>
</protein>
<proteinExistence type="inferred from homology"/>
<feature type="chain" id="PRO_0000389655" description="Acetyl-coenzyme A carboxylase carboxyl transferase subunit beta">
    <location>
        <begin position="1"/>
        <end position="298"/>
    </location>
</feature>
<feature type="domain" description="CoA carboxyltransferase N-terminal" evidence="2">
    <location>
        <begin position="41"/>
        <end position="298"/>
    </location>
</feature>
<feature type="zinc finger region" description="C4-type" evidence="1">
    <location>
        <begin position="45"/>
        <end position="67"/>
    </location>
</feature>
<feature type="region of interest" description="Disordered" evidence="3">
    <location>
        <begin position="1"/>
        <end position="21"/>
    </location>
</feature>
<feature type="binding site" evidence="1">
    <location>
        <position position="45"/>
    </location>
    <ligand>
        <name>Zn(2+)</name>
        <dbReference type="ChEBI" id="CHEBI:29105"/>
    </ligand>
</feature>
<feature type="binding site" evidence="1">
    <location>
        <position position="48"/>
    </location>
    <ligand>
        <name>Zn(2+)</name>
        <dbReference type="ChEBI" id="CHEBI:29105"/>
    </ligand>
</feature>
<feature type="binding site" evidence="1">
    <location>
        <position position="64"/>
    </location>
    <ligand>
        <name>Zn(2+)</name>
        <dbReference type="ChEBI" id="CHEBI:29105"/>
    </ligand>
</feature>
<feature type="binding site" evidence="1">
    <location>
        <position position="67"/>
    </location>
    <ligand>
        <name>Zn(2+)</name>
        <dbReference type="ChEBI" id="CHEBI:29105"/>
    </ligand>
</feature>
<accession>B7GWQ6</accession>
<keyword id="KW-0067">ATP-binding</keyword>
<keyword id="KW-0963">Cytoplasm</keyword>
<keyword id="KW-0275">Fatty acid biosynthesis</keyword>
<keyword id="KW-0276">Fatty acid metabolism</keyword>
<keyword id="KW-0444">Lipid biosynthesis</keyword>
<keyword id="KW-0443">Lipid metabolism</keyword>
<keyword id="KW-0479">Metal-binding</keyword>
<keyword id="KW-0547">Nucleotide-binding</keyword>
<keyword id="KW-0808">Transferase</keyword>
<keyword id="KW-0862">Zinc</keyword>
<keyword id="KW-0863">Zinc-finger</keyword>
<dbReference type="EC" id="2.1.3.15" evidence="1"/>
<dbReference type="EMBL" id="CP001172">
    <property type="protein sequence ID" value="ACJ58797.1"/>
    <property type="molecule type" value="Genomic_DNA"/>
</dbReference>
<dbReference type="RefSeq" id="WP_001071168.1">
    <property type="nucleotide sequence ID" value="NZ_CP001172.1"/>
</dbReference>
<dbReference type="SMR" id="B7GWQ6"/>
<dbReference type="GeneID" id="92895146"/>
<dbReference type="HOGENOM" id="CLU_015486_1_0_6"/>
<dbReference type="UniPathway" id="UPA00655">
    <property type="reaction ID" value="UER00711"/>
</dbReference>
<dbReference type="Proteomes" id="UP000006924">
    <property type="component" value="Chromosome"/>
</dbReference>
<dbReference type="GO" id="GO:0009329">
    <property type="term" value="C:acetate CoA-transferase complex"/>
    <property type="evidence" value="ECO:0007669"/>
    <property type="project" value="TreeGrafter"/>
</dbReference>
<dbReference type="GO" id="GO:0003989">
    <property type="term" value="F:acetyl-CoA carboxylase activity"/>
    <property type="evidence" value="ECO:0007669"/>
    <property type="project" value="InterPro"/>
</dbReference>
<dbReference type="GO" id="GO:0005524">
    <property type="term" value="F:ATP binding"/>
    <property type="evidence" value="ECO:0007669"/>
    <property type="project" value="UniProtKB-KW"/>
</dbReference>
<dbReference type="GO" id="GO:0016743">
    <property type="term" value="F:carboxyl- or carbamoyltransferase activity"/>
    <property type="evidence" value="ECO:0007669"/>
    <property type="project" value="UniProtKB-UniRule"/>
</dbReference>
<dbReference type="GO" id="GO:0008270">
    <property type="term" value="F:zinc ion binding"/>
    <property type="evidence" value="ECO:0007669"/>
    <property type="project" value="UniProtKB-UniRule"/>
</dbReference>
<dbReference type="GO" id="GO:0006633">
    <property type="term" value="P:fatty acid biosynthetic process"/>
    <property type="evidence" value="ECO:0007669"/>
    <property type="project" value="UniProtKB-KW"/>
</dbReference>
<dbReference type="GO" id="GO:2001295">
    <property type="term" value="P:malonyl-CoA biosynthetic process"/>
    <property type="evidence" value="ECO:0007669"/>
    <property type="project" value="UniProtKB-UniRule"/>
</dbReference>
<dbReference type="Gene3D" id="3.90.226.10">
    <property type="entry name" value="2-enoyl-CoA Hydratase, Chain A, domain 1"/>
    <property type="match status" value="1"/>
</dbReference>
<dbReference type="HAMAP" id="MF_01395">
    <property type="entry name" value="AcetylCoA_CT_beta"/>
    <property type="match status" value="1"/>
</dbReference>
<dbReference type="InterPro" id="IPR034733">
    <property type="entry name" value="AcCoA_carboxyl_beta"/>
</dbReference>
<dbReference type="InterPro" id="IPR000438">
    <property type="entry name" value="Acetyl_CoA_COase_Trfase_b_su"/>
</dbReference>
<dbReference type="InterPro" id="IPR029045">
    <property type="entry name" value="ClpP/crotonase-like_dom_sf"/>
</dbReference>
<dbReference type="InterPro" id="IPR011762">
    <property type="entry name" value="COA_CT_N"/>
</dbReference>
<dbReference type="NCBIfam" id="TIGR00515">
    <property type="entry name" value="accD"/>
    <property type="match status" value="1"/>
</dbReference>
<dbReference type="PANTHER" id="PTHR42995">
    <property type="entry name" value="ACETYL-COENZYME A CARBOXYLASE CARBOXYL TRANSFERASE SUBUNIT BETA, CHLOROPLASTIC"/>
    <property type="match status" value="1"/>
</dbReference>
<dbReference type="PANTHER" id="PTHR42995:SF5">
    <property type="entry name" value="ACETYL-COENZYME A CARBOXYLASE CARBOXYL TRANSFERASE SUBUNIT BETA, CHLOROPLASTIC"/>
    <property type="match status" value="1"/>
</dbReference>
<dbReference type="Pfam" id="PF01039">
    <property type="entry name" value="Carboxyl_trans"/>
    <property type="match status" value="1"/>
</dbReference>
<dbReference type="PRINTS" id="PR01070">
    <property type="entry name" value="ACCCTRFRASEB"/>
</dbReference>
<dbReference type="SUPFAM" id="SSF52096">
    <property type="entry name" value="ClpP/crotonase"/>
    <property type="match status" value="1"/>
</dbReference>
<dbReference type="PROSITE" id="PS50980">
    <property type="entry name" value="COA_CT_NTER"/>
    <property type="match status" value="1"/>
</dbReference>
<reference key="1">
    <citation type="journal article" date="2008" name="J. Bacteriol.">
        <title>Comparative genome sequence analysis of multidrug-resistant Acinetobacter baumannii.</title>
        <authorList>
            <person name="Adams M.D."/>
            <person name="Goglin K."/>
            <person name="Molyneaux N."/>
            <person name="Hujer K.M."/>
            <person name="Lavender H."/>
            <person name="Jamison J.J."/>
            <person name="MacDonald I.J."/>
            <person name="Martin K.M."/>
            <person name="Russo T."/>
            <person name="Campagnari A.A."/>
            <person name="Hujer A.M."/>
            <person name="Bonomo R.A."/>
            <person name="Gill S.R."/>
        </authorList>
    </citation>
    <scope>NUCLEOTIDE SEQUENCE [LARGE SCALE GENOMIC DNA]</scope>
    <source>
        <strain>AB307-0294</strain>
    </source>
</reference>
<sequence length="298" mass="32972">MNQEVKSGKVLSPSTPWTQRPVPGIEVADEQQTLKATFTEPTIECPECHALVTRTAISFNAYVCPQCDEHLRMKARDRLNWFFDNVVAELGQEFSAKDPLKFVDSKPYPDRMREAQTKTGETEALIAMQGNLNGVDMIACAFEFDFMGGSMGTVVGDRFVKAAELAIEKRQPLICFAASGGARMQEGMLSLMQMARTSAAIQKLKDAGLPYIVVLTHPVYGGVTASLAMLGDIHIAEPKAMIGFAGKRVIEQTVRETLEEPFQRAEYLLDHGVVDQIVHRHALRDTVSRLVSKLMNLP</sequence>
<name>ACCD_ACIB3</name>
<organism>
    <name type="scientific">Acinetobacter baumannii (strain AB307-0294)</name>
    <dbReference type="NCBI Taxonomy" id="557600"/>
    <lineage>
        <taxon>Bacteria</taxon>
        <taxon>Pseudomonadati</taxon>
        <taxon>Pseudomonadota</taxon>
        <taxon>Gammaproteobacteria</taxon>
        <taxon>Moraxellales</taxon>
        <taxon>Moraxellaceae</taxon>
        <taxon>Acinetobacter</taxon>
        <taxon>Acinetobacter calcoaceticus/baumannii complex</taxon>
    </lineage>
</organism>
<gene>
    <name evidence="1" type="primary">accD</name>
    <name type="ordered locus">ABBFA_000593</name>
</gene>
<comment type="function">
    <text evidence="1">Component of the acetyl coenzyme A carboxylase (ACC) complex. Biotin carboxylase (BC) catalyzes the carboxylation of biotin on its carrier protein (BCCP) and then the CO(2) group is transferred by the transcarboxylase to acetyl-CoA to form malonyl-CoA.</text>
</comment>
<comment type="catalytic activity">
    <reaction evidence="1">
        <text>N(6)-carboxybiotinyl-L-lysyl-[protein] + acetyl-CoA = N(6)-biotinyl-L-lysyl-[protein] + malonyl-CoA</text>
        <dbReference type="Rhea" id="RHEA:54728"/>
        <dbReference type="Rhea" id="RHEA-COMP:10505"/>
        <dbReference type="Rhea" id="RHEA-COMP:10506"/>
        <dbReference type="ChEBI" id="CHEBI:57288"/>
        <dbReference type="ChEBI" id="CHEBI:57384"/>
        <dbReference type="ChEBI" id="CHEBI:83144"/>
        <dbReference type="ChEBI" id="CHEBI:83145"/>
        <dbReference type="EC" id="2.1.3.15"/>
    </reaction>
</comment>
<comment type="cofactor">
    <cofactor evidence="1">
        <name>Zn(2+)</name>
        <dbReference type="ChEBI" id="CHEBI:29105"/>
    </cofactor>
    <text evidence="1">Binds 1 zinc ion per subunit.</text>
</comment>
<comment type="pathway">
    <text evidence="1">Lipid metabolism; malonyl-CoA biosynthesis; malonyl-CoA from acetyl-CoA: step 1/1.</text>
</comment>
<comment type="subunit">
    <text evidence="1">Acetyl-CoA carboxylase is a heterohexamer composed of biotin carboxyl carrier protein (AccB), biotin carboxylase (AccC) and two subunits each of ACCase subunit alpha (AccA) and ACCase subunit beta (AccD).</text>
</comment>
<comment type="subcellular location">
    <subcellularLocation>
        <location evidence="1">Cytoplasm</location>
    </subcellularLocation>
</comment>
<comment type="similarity">
    <text evidence="1">Belongs to the AccD/PCCB family.</text>
</comment>